<sequence>MATERTLAILKPDCVRKEKVGEVLRRIQDAGFQLCAMKMITMSKAEAEGFYAVHEDKPFFDDLTDFMSSGPCVPVVLEKENAIADFRELIGATDPDEAAEGTIRSDFAGSIQENIVHGSDSPSNGQKEAGYFFPEHEIVANT</sequence>
<protein>
    <recommendedName>
        <fullName evidence="1">Nucleoside diphosphate kinase</fullName>
        <shortName evidence="1">NDK</shortName>
        <shortName evidence="1">NDP kinase</shortName>
        <ecNumber evidence="1">2.7.4.6</ecNumber>
    </recommendedName>
    <alternativeName>
        <fullName evidence="1">Nucleoside-2-P kinase</fullName>
    </alternativeName>
</protein>
<keyword id="KW-0067">ATP-binding</keyword>
<keyword id="KW-0963">Cytoplasm</keyword>
<keyword id="KW-0418">Kinase</keyword>
<keyword id="KW-0460">Magnesium</keyword>
<keyword id="KW-0479">Metal-binding</keyword>
<keyword id="KW-0546">Nucleotide metabolism</keyword>
<keyword id="KW-0547">Nucleotide-binding</keyword>
<keyword id="KW-0597">Phosphoprotein</keyword>
<keyword id="KW-1185">Reference proteome</keyword>
<keyword id="KW-0808">Transferase</keyword>
<organism>
    <name type="scientific">Salinibacter ruber (strain DSM 13855 / M31)</name>
    <dbReference type="NCBI Taxonomy" id="309807"/>
    <lineage>
        <taxon>Bacteria</taxon>
        <taxon>Pseudomonadati</taxon>
        <taxon>Rhodothermota</taxon>
        <taxon>Rhodothermia</taxon>
        <taxon>Rhodothermales</taxon>
        <taxon>Salinibacteraceae</taxon>
        <taxon>Salinibacter</taxon>
    </lineage>
</organism>
<name>NDK_SALRD</name>
<reference key="1">
    <citation type="journal article" date="2005" name="Proc. Natl. Acad. Sci. U.S.A.">
        <title>The genome of Salinibacter ruber: convergence and gene exchange among hyperhalophilic bacteria and archaea.</title>
        <authorList>
            <person name="Mongodin E.F."/>
            <person name="Nelson K.E."/>
            <person name="Daugherty S."/>
            <person name="DeBoy R.T."/>
            <person name="Wister J."/>
            <person name="Khouri H."/>
            <person name="Weidman J."/>
            <person name="Walsh D.A."/>
            <person name="Papke R.T."/>
            <person name="Sanchez Perez G."/>
            <person name="Sharma A.K."/>
            <person name="Nesbo C.L."/>
            <person name="MacLeod D."/>
            <person name="Bapteste E."/>
            <person name="Doolittle W.F."/>
            <person name="Charlebois R.L."/>
            <person name="Legault B."/>
            <person name="Rodriguez-Valera F."/>
        </authorList>
    </citation>
    <scope>NUCLEOTIDE SEQUENCE [LARGE SCALE GENOMIC DNA]</scope>
    <source>
        <strain>DSM 13855 / CECT 5946 / M31</strain>
    </source>
</reference>
<accession>Q2S3M6</accession>
<evidence type="ECO:0000255" key="1">
    <source>
        <dbReference type="HAMAP-Rule" id="MF_00451"/>
    </source>
</evidence>
<comment type="function">
    <text evidence="1">Major role in the synthesis of nucleoside triphosphates other than ATP. The ATP gamma phosphate is transferred to the NDP beta phosphate via a ping-pong mechanism, using a phosphorylated active-site intermediate.</text>
</comment>
<comment type="catalytic activity">
    <reaction evidence="1">
        <text>a 2'-deoxyribonucleoside 5'-diphosphate + ATP = a 2'-deoxyribonucleoside 5'-triphosphate + ADP</text>
        <dbReference type="Rhea" id="RHEA:44640"/>
        <dbReference type="ChEBI" id="CHEBI:30616"/>
        <dbReference type="ChEBI" id="CHEBI:61560"/>
        <dbReference type="ChEBI" id="CHEBI:73316"/>
        <dbReference type="ChEBI" id="CHEBI:456216"/>
        <dbReference type="EC" id="2.7.4.6"/>
    </reaction>
</comment>
<comment type="catalytic activity">
    <reaction evidence="1">
        <text>a ribonucleoside 5'-diphosphate + ATP = a ribonucleoside 5'-triphosphate + ADP</text>
        <dbReference type="Rhea" id="RHEA:18113"/>
        <dbReference type="ChEBI" id="CHEBI:30616"/>
        <dbReference type="ChEBI" id="CHEBI:57930"/>
        <dbReference type="ChEBI" id="CHEBI:61557"/>
        <dbReference type="ChEBI" id="CHEBI:456216"/>
        <dbReference type="EC" id="2.7.4.6"/>
    </reaction>
</comment>
<comment type="cofactor">
    <cofactor evidence="1">
        <name>Mg(2+)</name>
        <dbReference type="ChEBI" id="CHEBI:18420"/>
    </cofactor>
</comment>
<comment type="subunit">
    <text evidence="1">Homotetramer.</text>
</comment>
<comment type="subcellular location">
    <subcellularLocation>
        <location evidence="1">Cytoplasm</location>
    </subcellularLocation>
</comment>
<comment type="similarity">
    <text evidence="1">Belongs to the NDK family.</text>
</comment>
<proteinExistence type="inferred from homology"/>
<feature type="chain" id="PRO_0000242516" description="Nucleoside diphosphate kinase">
    <location>
        <begin position="1"/>
        <end position="142"/>
    </location>
</feature>
<feature type="active site" description="Pros-phosphohistidine intermediate" evidence="1">
    <location>
        <position position="117"/>
    </location>
</feature>
<feature type="binding site" evidence="1">
    <location>
        <position position="11"/>
    </location>
    <ligand>
        <name>ATP</name>
        <dbReference type="ChEBI" id="CHEBI:30616"/>
    </ligand>
</feature>
<feature type="binding site" evidence="1">
    <location>
        <position position="59"/>
    </location>
    <ligand>
        <name>ATP</name>
        <dbReference type="ChEBI" id="CHEBI:30616"/>
    </ligand>
</feature>
<feature type="binding site" evidence="1">
    <location>
        <position position="87"/>
    </location>
    <ligand>
        <name>ATP</name>
        <dbReference type="ChEBI" id="CHEBI:30616"/>
    </ligand>
</feature>
<feature type="binding site" evidence="1">
    <location>
        <position position="93"/>
    </location>
    <ligand>
        <name>ATP</name>
        <dbReference type="ChEBI" id="CHEBI:30616"/>
    </ligand>
</feature>
<feature type="binding site" evidence="1">
    <location>
        <position position="104"/>
    </location>
    <ligand>
        <name>ATP</name>
        <dbReference type="ChEBI" id="CHEBI:30616"/>
    </ligand>
</feature>
<feature type="binding site" evidence="1">
    <location>
        <position position="114"/>
    </location>
    <ligand>
        <name>ATP</name>
        <dbReference type="ChEBI" id="CHEBI:30616"/>
    </ligand>
</feature>
<gene>
    <name evidence="1" type="primary">ndk</name>
    <name type="ordered locus">SRU_1075</name>
</gene>
<dbReference type="EC" id="2.7.4.6" evidence="1"/>
<dbReference type="EMBL" id="CP000159">
    <property type="protein sequence ID" value="ABC44829.1"/>
    <property type="molecule type" value="Genomic_DNA"/>
</dbReference>
<dbReference type="RefSeq" id="WP_011403833.1">
    <property type="nucleotide sequence ID" value="NC_007677.1"/>
</dbReference>
<dbReference type="RefSeq" id="YP_445205.1">
    <property type="nucleotide sequence ID" value="NC_007677.1"/>
</dbReference>
<dbReference type="SMR" id="Q2S3M6"/>
<dbReference type="STRING" id="309807.SRU_1075"/>
<dbReference type="EnsemblBacteria" id="ABC44829">
    <property type="protein sequence ID" value="ABC44829"/>
    <property type="gene ID" value="SRU_1075"/>
</dbReference>
<dbReference type="GeneID" id="83728004"/>
<dbReference type="KEGG" id="sru:SRU_1075"/>
<dbReference type="PATRIC" id="fig|309807.25.peg.1112"/>
<dbReference type="eggNOG" id="COG0105">
    <property type="taxonomic scope" value="Bacteria"/>
</dbReference>
<dbReference type="HOGENOM" id="CLU_060216_8_1_10"/>
<dbReference type="OrthoDB" id="9801161at2"/>
<dbReference type="Proteomes" id="UP000008674">
    <property type="component" value="Chromosome"/>
</dbReference>
<dbReference type="GO" id="GO:0005737">
    <property type="term" value="C:cytoplasm"/>
    <property type="evidence" value="ECO:0007669"/>
    <property type="project" value="UniProtKB-SubCell"/>
</dbReference>
<dbReference type="GO" id="GO:0005524">
    <property type="term" value="F:ATP binding"/>
    <property type="evidence" value="ECO:0007669"/>
    <property type="project" value="UniProtKB-UniRule"/>
</dbReference>
<dbReference type="GO" id="GO:0046872">
    <property type="term" value="F:metal ion binding"/>
    <property type="evidence" value="ECO:0007669"/>
    <property type="project" value="UniProtKB-KW"/>
</dbReference>
<dbReference type="GO" id="GO:0004550">
    <property type="term" value="F:nucleoside diphosphate kinase activity"/>
    <property type="evidence" value="ECO:0007669"/>
    <property type="project" value="UniProtKB-UniRule"/>
</dbReference>
<dbReference type="GO" id="GO:0006241">
    <property type="term" value="P:CTP biosynthetic process"/>
    <property type="evidence" value="ECO:0007669"/>
    <property type="project" value="UniProtKB-UniRule"/>
</dbReference>
<dbReference type="GO" id="GO:0006183">
    <property type="term" value="P:GTP biosynthetic process"/>
    <property type="evidence" value="ECO:0007669"/>
    <property type="project" value="UniProtKB-UniRule"/>
</dbReference>
<dbReference type="GO" id="GO:0006228">
    <property type="term" value="P:UTP biosynthetic process"/>
    <property type="evidence" value="ECO:0007669"/>
    <property type="project" value="UniProtKB-UniRule"/>
</dbReference>
<dbReference type="CDD" id="cd04413">
    <property type="entry name" value="NDPk_I"/>
    <property type="match status" value="1"/>
</dbReference>
<dbReference type="FunFam" id="3.30.70.141:FF:000003">
    <property type="entry name" value="Nucleoside diphosphate kinase"/>
    <property type="match status" value="1"/>
</dbReference>
<dbReference type="Gene3D" id="3.30.70.141">
    <property type="entry name" value="Nucleoside diphosphate kinase-like domain"/>
    <property type="match status" value="1"/>
</dbReference>
<dbReference type="HAMAP" id="MF_00451">
    <property type="entry name" value="NDP_kinase"/>
    <property type="match status" value="1"/>
</dbReference>
<dbReference type="InterPro" id="IPR034907">
    <property type="entry name" value="NDK-like_dom"/>
</dbReference>
<dbReference type="InterPro" id="IPR036850">
    <property type="entry name" value="NDK-like_dom_sf"/>
</dbReference>
<dbReference type="InterPro" id="IPR001564">
    <property type="entry name" value="Nucleoside_diP_kinase"/>
</dbReference>
<dbReference type="InterPro" id="IPR023005">
    <property type="entry name" value="Nucleoside_diP_kinase_AS"/>
</dbReference>
<dbReference type="NCBIfam" id="NF001908">
    <property type="entry name" value="PRK00668.1"/>
    <property type="match status" value="1"/>
</dbReference>
<dbReference type="PANTHER" id="PTHR46161">
    <property type="entry name" value="NUCLEOSIDE DIPHOSPHATE KINASE"/>
    <property type="match status" value="1"/>
</dbReference>
<dbReference type="PANTHER" id="PTHR46161:SF3">
    <property type="entry name" value="NUCLEOSIDE DIPHOSPHATE KINASE DDB_G0292928-RELATED"/>
    <property type="match status" value="1"/>
</dbReference>
<dbReference type="Pfam" id="PF00334">
    <property type="entry name" value="NDK"/>
    <property type="match status" value="1"/>
</dbReference>
<dbReference type="PRINTS" id="PR01243">
    <property type="entry name" value="NUCDPKINASE"/>
</dbReference>
<dbReference type="SMART" id="SM00562">
    <property type="entry name" value="NDK"/>
    <property type="match status" value="1"/>
</dbReference>
<dbReference type="SUPFAM" id="SSF54919">
    <property type="entry name" value="Nucleoside diphosphate kinase, NDK"/>
    <property type="match status" value="1"/>
</dbReference>
<dbReference type="PROSITE" id="PS00469">
    <property type="entry name" value="NDPK"/>
    <property type="match status" value="1"/>
</dbReference>
<dbReference type="PROSITE" id="PS51374">
    <property type="entry name" value="NDPK_LIKE"/>
    <property type="match status" value="1"/>
</dbReference>